<evidence type="ECO:0000255" key="1">
    <source>
        <dbReference type="PROSITE-ProRule" id="PRU00805"/>
    </source>
</evidence>
<evidence type="ECO:0000269" key="2">
    <source>
    </source>
</evidence>
<evidence type="ECO:0000269" key="3">
    <source>
    </source>
</evidence>
<evidence type="ECO:0000269" key="4">
    <source>
    </source>
</evidence>
<evidence type="ECO:0000303" key="5">
    <source>
    </source>
</evidence>
<evidence type="ECO:0000305" key="6"/>
<evidence type="ECO:0000305" key="7">
    <source>
    </source>
</evidence>
<sequence>MTKPQPPPILDFSVFYGHDSQAKAQLVQRVRECCLNNGFFQITGHKVSPELQRRTFDCAKRFFDLPLIEKKKIERSPDAFNRGYEAFQSHMSQPGSAPDRKEGLFLGPDLAEDHPYCVQKKLNCGPNRWPQGLDDLEEFKLVSMEYYAALFQLAKDVVAVLALTMDYEETFFDPLTEGAIATLRYLHYPPQPVGDAEAGLGTGAHRDYSCITLLLQDGTGGLQVLDEPTGQWLDVKPVPGAYIVNLANVFARMTNGHYKSALHRVVNKSGMERYSIPFFFTGNPDYVCECLSRFRKEGEPVRHPPATVHEVVAEAVRGTVERANRYNAERQGIHAAQ</sequence>
<name>ENCD_ASPFU</name>
<protein>
    <recommendedName>
        <fullName evidence="5">2-oxoglutarate-Fe(II) type oxidoreductase</fullName>
        <ecNumber evidence="1">1.14.11.-</ecNumber>
    </recommendedName>
    <alternativeName>
        <fullName evidence="5">Endocrocin synthesis protein D</fullName>
    </alternativeName>
</protein>
<organism>
    <name type="scientific">Aspergillus fumigatus (strain ATCC MYA-4609 / CBS 101355 / FGSC A1100 / Af293)</name>
    <name type="common">Neosartorya fumigata</name>
    <dbReference type="NCBI Taxonomy" id="330879"/>
    <lineage>
        <taxon>Eukaryota</taxon>
        <taxon>Fungi</taxon>
        <taxon>Dikarya</taxon>
        <taxon>Ascomycota</taxon>
        <taxon>Pezizomycotina</taxon>
        <taxon>Eurotiomycetes</taxon>
        <taxon>Eurotiomycetidae</taxon>
        <taxon>Eurotiales</taxon>
        <taxon>Aspergillaceae</taxon>
        <taxon>Aspergillus</taxon>
        <taxon>Aspergillus subgen. Fumigati</taxon>
    </lineage>
</organism>
<reference key="1">
    <citation type="journal article" date="2005" name="Nature">
        <title>Genomic sequence of the pathogenic and allergenic filamentous fungus Aspergillus fumigatus.</title>
        <authorList>
            <person name="Nierman W.C."/>
            <person name="Pain A."/>
            <person name="Anderson M.J."/>
            <person name="Wortman J.R."/>
            <person name="Kim H.S."/>
            <person name="Arroyo J."/>
            <person name="Berriman M."/>
            <person name="Abe K."/>
            <person name="Archer D.B."/>
            <person name="Bermejo C."/>
            <person name="Bennett J.W."/>
            <person name="Bowyer P."/>
            <person name="Chen D."/>
            <person name="Collins M."/>
            <person name="Coulsen R."/>
            <person name="Davies R."/>
            <person name="Dyer P.S."/>
            <person name="Farman M.L."/>
            <person name="Fedorova N."/>
            <person name="Fedorova N.D."/>
            <person name="Feldblyum T.V."/>
            <person name="Fischer R."/>
            <person name="Fosker N."/>
            <person name="Fraser A."/>
            <person name="Garcia J.L."/>
            <person name="Garcia M.J."/>
            <person name="Goble A."/>
            <person name="Goldman G.H."/>
            <person name="Gomi K."/>
            <person name="Griffith-Jones S."/>
            <person name="Gwilliam R."/>
            <person name="Haas B.J."/>
            <person name="Haas H."/>
            <person name="Harris D.E."/>
            <person name="Horiuchi H."/>
            <person name="Huang J."/>
            <person name="Humphray S."/>
            <person name="Jimenez J."/>
            <person name="Keller N."/>
            <person name="Khouri H."/>
            <person name="Kitamoto K."/>
            <person name="Kobayashi T."/>
            <person name="Konzack S."/>
            <person name="Kulkarni R."/>
            <person name="Kumagai T."/>
            <person name="Lafton A."/>
            <person name="Latge J.-P."/>
            <person name="Li W."/>
            <person name="Lord A."/>
            <person name="Lu C."/>
            <person name="Majoros W.H."/>
            <person name="May G.S."/>
            <person name="Miller B.L."/>
            <person name="Mohamoud Y."/>
            <person name="Molina M."/>
            <person name="Monod M."/>
            <person name="Mouyna I."/>
            <person name="Mulligan S."/>
            <person name="Murphy L.D."/>
            <person name="O'Neil S."/>
            <person name="Paulsen I."/>
            <person name="Penalva M.A."/>
            <person name="Pertea M."/>
            <person name="Price C."/>
            <person name="Pritchard B.L."/>
            <person name="Quail M.A."/>
            <person name="Rabbinowitsch E."/>
            <person name="Rawlins N."/>
            <person name="Rajandream M.A."/>
            <person name="Reichard U."/>
            <person name="Renauld H."/>
            <person name="Robson G.D."/>
            <person name="Rodriguez de Cordoba S."/>
            <person name="Rodriguez-Pena J.M."/>
            <person name="Ronning C.M."/>
            <person name="Rutter S."/>
            <person name="Salzberg S.L."/>
            <person name="Sanchez M."/>
            <person name="Sanchez-Ferrero J.C."/>
            <person name="Saunders D."/>
            <person name="Seeger K."/>
            <person name="Squares R."/>
            <person name="Squares S."/>
            <person name="Takeuchi M."/>
            <person name="Tekaia F."/>
            <person name="Turner G."/>
            <person name="Vazquez de Aldana C.R."/>
            <person name="Weidman J."/>
            <person name="White O."/>
            <person name="Woodward J.R."/>
            <person name="Yu J.-H."/>
            <person name="Fraser C.M."/>
            <person name="Galagan J.E."/>
            <person name="Asai K."/>
            <person name="Machida M."/>
            <person name="Hall N."/>
            <person name="Barrell B.G."/>
            <person name="Denning D.W."/>
        </authorList>
    </citation>
    <scope>NUCLEOTIDE SEQUENCE [LARGE SCALE GENOMIC DNA]</scope>
    <source>
        <strain>ATCC MYA-4609 / CBS 101355 / FGSC A1100 / Af293</strain>
    </source>
</reference>
<reference key="2">
    <citation type="journal article" date="2010" name="Planta Med.">
        <title>Anti-inflammatory, cyclooxygenase (COX)-2, COX-1 inhibitory, and free radical scavenging effects of Rumex nepalensis.</title>
        <authorList>
            <person name="Gautam R."/>
            <person name="Karkhile K.V."/>
            <person name="Bhutani K.K."/>
            <person name="Jachak S.M."/>
        </authorList>
    </citation>
    <scope>BIOTECHNOLOGY</scope>
</reference>
<reference key="3">
    <citation type="journal article" date="2012" name="Appl. Environ. Microbiol.">
        <title>Genome-based cluster deletion reveals an endocrocin biosynthetic pathway in Aspergillus fumigatus.</title>
        <authorList>
            <person name="Lim F.Y."/>
            <person name="Hou Y."/>
            <person name="Chen Y."/>
            <person name="Oh J.H."/>
            <person name="Lee I."/>
            <person name="Bugni T.S."/>
            <person name="Keller N.P."/>
        </authorList>
    </citation>
    <scope>FUNCTION</scope>
    <scope>DISRUPTION PHENOTYPE</scope>
</reference>
<reference key="4">
    <citation type="journal article" date="2013" name="PLoS Pathog.">
        <title>Low-volume toolbox for the discovery of immunosuppressive fungal secondary metabolites.</title>
        <authorList>
            <person name="Berthier E."/>
            <person name="Lim F.Y."/>
            <person name="Deng Q."/>
            <person name="Guo C.J."/>
            <person name="Kontoyiannis D.P."/>
            <person name="Wang C.C."/>
            <person name="Rindy J."/>
            <person name="Beebe D.J."/>
            <person name="Huttenlocher A."/>
            <person name="Keller N.P."/>
        </authorList>
    </citation>
    <scope>FUNCTION</scope>
    <scope>TISSUE SPECIFICITY</scope>
</reference>
<reference key="5">
    <citation type="journal article" date="2016" name="Environ. Microbiol.">
        <title>Redundant synthesis of a conidial polyketide by two distinct secondary metabolite clusters in Aspergillus fumigatus.</title>
        <authorList>
            <person name="Throckmorton K."/>
            <person name="Lim F.Y."/>
            <person name="Kontoyiannis D.P."/>
            <person name="Zheng W."/>
            <person name="Keller N.P."/>
        </authorList>
    </citation>
    <scope>INDUCTION</scope>
</reference>
<dbReference type="EC" id="1.14.11.-" evidence="1"/>
<dbReference type="EMBL" id="AAHF01000017">
    <property type="protein sequence ID" value="EAL84395.2"/>
    <property type="molecule type" value="Genomic_DNA"/>
</dbReference>
<dbReference type="RefSeq" id="XP_746433.2">
    <property type="nucleotide sequence ID" value="XM_741340.2"/>
</dbReference>
<dbReference type="SMR" id="Q4W946"/>
<dbReference type="STRING" id="330879.Q4W946"/>
<dbReference type="EnsemblFungi" id="EAL84395">
    <property type="protein sequence ID" value="EAL84395"/>
    <property type="gene ID" value="AFUA_4G00230"/>
</dbReference>
<dbReference type="GeneID" id="3503737"/>
<dbReference type="KEGG" id="afm:AFUA_4G00230"/>
<dbReference type="VEuPathDB" id="FungiDB:Afu4g00230"/>
<dbReference type="eggNOG" id="KOG0143">
    <property type="taxonomic scope" value="Eukaryota"/>
</dbReference>
<dbReference type="HOGENOM" id="CLU_010119_6_3_1"/>
<dbReference type="InParanoid" id="Q4W946"/>
<dbReference type="OMA" id="NNTWNRG"/>
<dbReference type="OrthoDB" id="288590at2759"/>
<dbReference type="Proteomes" id="UP000002530">
    <property type="component" value="Chromosome 4"/>
</dbReference>
<dbReference type="GO" id="GO:0016706">
    <property type="term" value="F:2-oxoglutarate-dependent dioxygenase activity"/>
    <property type="evidence" value="ECO:0000318"/>
    <property type="project" value="GO_Central"/>
</dbReference>
<dbReference type="GO" id="GO:0046872">
    <property type="term" value="F:metal ion binding"/>
    <property type="evidence" value="ECO:0007669"/>
    <property type="project" value="UniProtKB-KW"/>
</dbReference>
<dbReference type="GO" id="GO:1900602">
    <property type="term" value="P:endocrocin biosynthetic process"/>
    <property type="evidence" value="ECO:0000315"/>
    <property type="project" value="AspGD"/>
</dbReference>
<dbReference type="FunFam" id="2.60.120.330:FF:000006">
    <property type="entry name" value="2-oxoglutarate-Fe(II) type oxidoreductase hxnY"/>
    <property type="match status" value="1"/>
</dbReference>
<dbReference type="Gene3D" id="2.60.120.330">
    <property type="entry name" value="B-lactam Antibiotic, Isopenicillin N Synthase, Chain"/>
    <property type="match status" value="1"/>
</dbReference>
<dbReference type="InterPro" id="IPR026992">
    <property type="entry name" value="DIOX_N"/>
</dbReference>
<dbReference type="InterPro" id="IPR044861">
    <property type="entry name" value="IPNS-like_FE2OG_OXY"/>
</dbReference>
<dbReference type="InterPro" id="IPR027443">
    <property type="entry name" value="IPNS-like_sf"/>
</dbReference>
<dbReference type="InterPro" id="IPR050231">
    <property type="entry name" value="Iron_ascorbate_oxido_reductase"/>
</dbReference>
<dbReference type="InterPro" id="IPR005123">
    <property type="entry name" value="Oxoglu/Fe-dep_dioxygenase_dom"/>
</dbReference>
<dbReference type="PANTHER" id="PTHR47990">
    <property type="entry name" value="2-OXOGLUTARATE (2OG) AND FE(II)-DEPENDENT OXYGENASE SUPERFAMILY PROTEIN-RELATED"/>
    <property type="match status" value="1"/>
</dbReference>
<dbReference type="Pfam" id="PF03171">
    <property type="entry name" value="2OG-FeII_Oxy"/>
    <property type="match status" value="1"/>
</dbReference>
<dbReference type="Pfam" id="PF14226">
    <property type="entry name" value="DIOX_N"/>
    <property type="match status" value="1"/>
</dbReference>
<dbReference type="PRINTS" id="PR00682">
    <property type="entry name" value="IPNSYNTHASE"/>
</dbReference>
<dbReference type="SUPFAM" id="SSF51197">
    <property type="entry name" value="Clavaminate synthase-like"/>
    <property type="match status" value="1"/>
</dbReference>
<dbReference type="PROSITE" id="PS51471">
    <property type="entry name" value="FE2OG_OXY"/>
    <property type="match status" value="1"/>
</dbReference>
<feature type="chain" id="PRO_0000437072" description="2-oxoglutarate-Fe(II) type oxidoreductase">
    <location>
        <begin position="1"/>
        <end position="337"/>
    </location>
</feature>
<feature type="domain" description="Fe2OG dioxygenase" evidence="1">
    <location>
        <begin position="179"/>
        <end position="282"/>
    </location>
</feature>
<feature type="binding site" evidence="1">
    <location>
        <position position="205"/>
    </location>
    <ligand>
        <name>Fe cation</name>
        <dbReference type="ChEBI" id="CHEBI:24875"/>
    </ligand>
</feature>
<feature type="binding site" evidence="1">
    <location>
        <position position="207"/>
    </location>
    <ligand>
        <name>Fe cation</name>
        <dbReference type="ChEBI" id="CHEBI:24875"/>
    </ligand>
</feature>
<feature type="binding site" evidence="1">
    <location>
        <position position="263"/>
    </location>
    <ligand>
        <name>Fe cation</name>
        <dbReference type="ChEBI" id="CHEBI:24875"/>
    </ligand>
</feature>
<feature type="binding site" evidence="1">
    <location>
        <position position="273"/>
    </location>
    <ligand>
        <name>2-oxoglutarate</name>
        <dbReference type="ChEBI" id="CHEBI:16810"/>
    </ligand>
</feature>
<proteinExistence type="evidence at protein level"/>
<gene>
    <name evidence="5" type="primary">encD</name>
    <name type="ORF">AFUA_4G00230</name>
</gene>
<accession>Q4W946</accession>
<keyword id="KW-0223">Dioxygenase</keyword>
<keyword id="KW-0408">Iron</keyword>
<keyword id="KW-0479">Metal-binding</keyword>
<keyword id="KW-0560">Oxidoreductase</keyword>
<keyword id="KW-1185">Reference proteome</keyword>
<comment type="function">
    <text evidence="3">2-oxoglutarate-Fe(II) type oxidoreductase; part of the gene cluster that mediates the biosynthesis of endocrocin, a simple anthraquinone interesting for many biotechnological applications (PubMed:22492455). The pathway begins with the synthesis of atrochrysone thioester by the polyketide synthase (PKS) encA (PubMed:22492455). The atrochrysone carboxyl ACP thioesterase encB then breaks the thioester bond and releases the atrochrysone carboxylic acid from encA (PubMed:22492455). The atrochrysone carboxylic acid is then converted to endocrocin anthrone which is further oxidized into endocrocin by encC (PubMed:22492455). The exact function of encD has not been identified yet, but it negatively regulates endocrocin production, likely through the modification of endocrocin itself (PubMed:22492455).</text>
</comment>
<comment type="cofactor">
    <cofactor evidence="1">
        <name>Fe(2+)</name>
        <dbReference type="ChEBI" id="CHEBI:29033"/>
    </cofactor>
    <text evidence="1">Binds 1 Fe(2+) ion per subunit.</text>
</comment>
<comment type="pathway">
    <text evidence="3">Secondary metabolite biosynthesis.</text>
</comment>
<comment type="tissue specificity">
    <text evidence="7">Endocrocin is specifically produced in conidia.</text>
</comment>
<comment type="induction">
    <text evidence="4">Expression is positively regulated by the transcription factors brlA and laeA (PubMed:26242966).</text>
</comment>
<comment type="disruption phenotype">
    <text evidence="3">Results in increased endocrocin production (PubMed:22492455).</text>
</comment>
<comment type="biotechnology">
    <text evidence="2">Endocrocin and related anthraquinones compounds have interesting activities for medicinal uses, including anti-inflammatory activity (PubMed:20379952).</text>
</comment>
<comment type="similarity">
    <text evidence="6">Belongs to the iron/ascorbate-dependent oxidoreductase family.</text>
</comment>